<protein>
    <recommendedName>
        <fullName evidence="1">Small ribosomal subunit protein bS16</fullName>
    </recommendedName>
    <alternativeName>
        <fullName evidence="2">30S ribosomal protein S16</fullName>
    </alternativeName>
</protein>
<dbReference type="EMBL" id="CR936503">
    <property type="protein sequence ID" value="CAI55019.1"/>
    <property type="molecule type" value="Genomic_DNA"/>
</dbReference>
<dbReference type="RefSeq" id="WP_011374423.1">
    <property type="nucleotide sequence ID" value="NC_007576.1"/>
</dbReference>
<dbReference type="SMR" id="Q38XR0"/>
<dbReference type="STRING" id="314315.LCA_0715"/>
<dbReference type="GeneID" id="57133577"/>
<dbReference type="KEGG" id="lsa:LCA_0715"/>
<dbReference type="eggNOG" id="COG0228">
    <property type="taxonomic scope" value="Bacteria"/>
</dbReference>
<dbReference type="HOGENOM" id="CLU_100590_5_0_9"/>
<dbReference type="OrthoDB" id="9807878at2"/>
<dbReference type="Proteomes" id="UP000002707">
    <property type="component" value="Chromosome"/>
</dbReference>
<dbReference type="GO" id="GO:0005737">
    <property type="term" value="C:cytoplasm"/>
    <property type="evidence" value="ECO:0007669"/>
    <property type="project" value="UniProtKB-ARBA"/>
</dbReference>
<dbReference type="GO" id="GO:0015935">
    <property type="term" value="C:small ribosomal subunit"/>
    <property type="evidence" value="ECO:0007669"/>
    <property type="project" value="TreeGrafter"/>
</dbReference>
<dbReference type="GO" id="GO:0003735">
    <property type="term" value="F:structural constituent of ribosome"/>
    <property type="evidence" value="ECO:0007669"/>
    <property type="project" value="InterPro"/>
</dbReference>
<dbReference type="GO" id="GO:0006412">
    <property type="term" value="P:translation"/>
    <property type="evidence" value="ECO:0007669"/>
    <property type="project" value="UniProtKB-UniRule"/>
</dbReference>
<dbReference type="FunFam" id="3.30.1320.10:FF:000002">
    <property type="entry name" value="30S ribosomal protein S16"/>
    <property type="match status" value="1"/>
</dbReference>
<dbReference type="Gene3D" id="3.30.1320.10">
    <property type="match status" value="1"/>
</dbReference>
<dbReference type="HAMAP" id="MF_00385">
    <property type="entry name" value="Ribosomal_bS16"/>
    <property type="match status" value="1"/>
</dbReference>
<dbReference type="InterPro" id="IPR000307">
    <property type="entry name" value="Ribosomal_bS16"/>
</dbReference>
<dbReference type="InterPro" id="IPR023803">
    <property type="entry name" value="Ribosomal_bS16_dom_sf"/>
</dbReference>
<dbReference type="NCBIfam" id="TIGR00002">
    <property type="entry name" value="S16"/>
    <property type="match status" value="1"/>
</dbReference>
<dbReference type="PANTHER" id="PTHR12919">
    <property type="entry name" value="30S RIBOSOMAL PROTEIN S16"/>
    <property type="match status" value="1"/>
</dbReference>
<dbReference type="PANTHER" id="PTHR12919:SF20">
    <property type="entry name" value="SMALL RIBOSOMAL SUBUNIT PROTEIN BS16M"/>
    <property type="match status" value="1"/>
</dbReference>
<dbReference type="Pfam" id="PF00886">
    <property type="entry name" value="Ribosomal_S16"/>
    <property type="match status" value="1"/>
</dbReference>
<dbReference type="SUPFAM" id="SSF54565">
    <property type="entry name" value="Ribosomal protein S16"/>
    <property type="match status" value="1"/>
</dbReference>
<feature type="chain" id="PRO_0000243818" description="Small ribosomal subunit protein bS16">
    <location>
        <begin position="1"/>
        <end position="91"/>
    </location>
</feature>
<accession>Q38XR0</accession>
<name>RS16_LATSS</name>
<gene>
    <name evidence="1" type="primary">rpsP</name>
    <name type="ordered locus">LCA_0715</name>
</gene>
<reference key="1">
    <citation type="journal article" date="2005" name="Nat. Biotechnol.">
        <title>The complete genome sequence of the meat-borne lactic acid bacterium Lactobacillus sakei 23K.</title>
        <authorList>
            <person name="Chaillou S."/>
            <person name="Champomier-Verges M.-C."/>
            <person name="Cornet M."/>
            <person name="Crutz-Le Coq A.-M."/>
            <person name="Dudez A.-M."/>
            <person name="Martin V."/>
            <person name="Beaufils S."/>
            <person name="Darbon-Rongere E."/>
            <person name="Bossy R."/>
            <person name="Loux V."/>
            <person name="Zagorec M."/>
        </authorList>
    </citation>
    <scope>NUCLEOTIDE SEQUENCE [LARGE SCALE GENOMIC DNA]</scope>
    <source>
        <strain>23K</strain>
    </source>
</reference>
<proteinExistence type="inferred from homology"/>
<comment type="similarity">
    <text evidence="1">Belongs to the bacterial ribosomal protein bS16 family.</text>
</comment>
<evidence type="ECO:0000255" key="1">
    <source>
        <dbReference type="HAMAP-Rule" id="MF_00385"/>
    </source>
</evidence>
<evidence type="ECO:0000305" key="2"/>
<sequence>MSVKIRMKRMGSKKRPFYRIVVADSRSPRDGRFIQQVGYYNPLTEPVDLKLEEEVIMDWLQKGAQPSDTVRNLLSKQGIMQKYHEARFAKK</sequence>
<organism>
    <name type="scientific">Latilactobacillus sakei subsp. sakei (strain 23K)</name>
    <name type="common">Lactobacillus sakei subsp. sakei</name>
    <dbReference type="NCBI Taxonomy" id="314315"/>
    <lineage>
        <taxon>Bacteria</taxon>
        <taxon>Bacillati</taxon>
        <taxon>Bacillota</taxon>
        <taxon>Bacilli</taxon>
        <taxon>Lactobacillales</taxon>
        <taxon>Lactobacillaceae</taxon>
        <taxon>Latilactobacillus</taxon>
    </lineage>
</organism>
<keyword id="KW-1185">Reference proteome</keyword>
<keyword id="KW-0687">Ribonucleoprotein</keyword>
<keyword id="KW-0689">Ribosomal protein</keyword>